<dbReference type="EC" id="2.7.4.9" evidence="1"/>
<dbReference type="EMBL" id="CP000003">
    <property type="protein sequence ID" value="AAT86491.1"/>
    <property type="status" value="ALT_INIT"/>
    <property type="molecule type" value="Genomic_DNA"/>
</dbReference>
<dbReference type="RefSeq" id="WP_011184214.1">
    <property type="nucleotide sequence ID" value="NC_006086.1"/>
</dbReference>
<dbReference type="SMR" id="Q5XDM2"/>
<dbReference type="KEGG" id="spa:M6_Spy0356"/>
<dbReference type="HOGENOM" id="CLU_049131_0_2_9"/>
<dbReference type="Proteomes" id="UP000001167">
    <property type="component" value="Chromosome"/>
</dbReference>
<dbReference type="GO" id="GO:0005829">
    <property type="term" value="C:cytosol"/>
    <property type="evidence" value="ECO:0007669"/>
    <property type="project" value="TreeGrafter"/>
</dbReference>
<dbReference type="GO" id="GO:0005524">
    <property type="term" value="F:ATP binding"/>
    <property type="evidence" value="ECO:0007669"/>
    <property type="project" value="UniProtKB-UniRule"/>
</dbReference>
<dbReference type="GO" id="GO:0004798">
    <property type="term" value="F:dTMP kinase activity"/>
    <property type="evidence" value="ECO:0007669"/>
    <property type="project" value="UniProtKB-UniRule"/>
</dbReference>
<dbReference type="GO" id="GO:0006233">
    <property type="term" value="P:dTDP biosynthetic process"/>
    <property type="evidence" value="ECO:0007669"/>
    <property type="project" value="InterPro"/>
</dbReference>
<dbReference type="GO" id="GO:0006235">
    <property type="term" value="P:dTTP biosynthetic process"/>
    <property type="evidence" value="ECO:0007669"/>
    <property type="project" value="UniProtKB-UniRule"/>
</dbReference>
<dbReference type="GO" id="GO:0006227">
    <property type="term" value="P:dUDP biosynthetic process"/>
    <property type="evidence" value="ECO:0007669"/>
    <property type="project" value="TreeGrafter"/>
</dbReference>
<dbReference type="CDD" id="cd01672">
    <property type="entry name" value="TMPK"/>
    <property type="match status" value="1"/>
</dbReference>
<dbReference type="FunFam" id="3.40.50.300:FF:000225">
    <property type="entry name" value="Thymidylate kinase"/>
    <property type="match status" value="1"/>
</dbReference>
<dbReference type="Gene3D" id="3.40.50.300">
    <property type="entry name" value="P-loop containing nucleotide triphosphate hydrolases"/>
    <property type="match status" value="1"/>
</dbReference>
<dbReference type="HAMAP" id="MF_00165">
    <property type="entry name" value="Thymidylate_kinase"/>
    <property type="match status" value="1"/>
</dbReference>
<dbReference type="InterPro" id="IPR027417">
    <property type="entry name" value="P-loop_NTPase"/>
</dbReference>
<dbReference type="InterPro" id="IPR039430">
    <property type="entry name" value="Thymidylate_kin-like_dom"/>
</dbReference>
<dbReference type="InterPro" id="IPR018094">
    <property type="entry name" value="Thymidylate_kinase"/>
</dbReference>
<dbReference type="NCBIfam" id="TIGR00041">
    <property type="entry name" value="DTMP_kinase"/>
    <property type="match status" value="1"/>
</dbReference>
<dbReference type="PANTHER" id="PTHR10344">
    <property type="entry name" value="THYMIDYLATE KINASE"/>
    <property type="match status" value="1"/>
</dbReference>
<dbReference type="PANTHER" id="PTHR10344:SF4">
    <property type="entry name" value="UMP-CMP KINASE 2, MITOCHONDRIAL"/>
    <property type="match status" value="1"/>
</dbReference>
<dbReference type="Pfam" id="PF02223">
    <property type="entry name" value="Thymidylate_kin"/>
    <property type="match status" value="1"/>
</dbReference>
<dbReference type="SUPFAM" id="SSF52540">
    <property type="entry name" value="P-loop containing nucleoside triphosphate hydrolases"/>
    <property type="match status" value="1"/>
</dbReference>
<reference key="1">
    <citation type="journal article" date="2004" name="J. Infect. Dis.">
        <title>Progress toward characterization of the group A Streptococcus metagenome: complete genome sequence of a macrolide-resistant serotype M6 strain.</title>
        <authorList>
            <person name="Banks D.J."/>
            <person name="Porcella S.F."/>
            <person name="Barbian K.D."/>
            <person name="Beres S.B."/>
            <person name="Philips L.E."/>
            <person name="Voyich J.M."/>
            <person name="DeLeo F.R."/>
            <person name="Martin J.M."/>
            <person name="Somerville G.A."/>
            <person name="Musser J.M."/>
        </authorList>
    </citation>
    <scope>NUCLEOTIDE SEQUENCE [LARGE SCALE GENOMIC DNA]</scope>
    <source>
        <strain>ATCC BAA-946 / MGAS10394</strain>
    </source>
</reference>
<protein>
    <recommendedName>
        <fullName evidence="1">Thymidylate kinase</fullName>
        <ecNumber evidence="1">2.7.4.9</ecNumber>
    </recommendedName>
    <alternativeName>
        <fullName evidence="1">dTMP kinase</fullName>
    </alternativeName>
</protein>
<gene>
    <name evidence="1" type="primary">tmk</name>
    <name type="ordered locus">M6_Spy0356</name>
</gene>
<evidence type="ECO:0000255" key="1">
    <source>
        <dbReference type="HAMAP-Rule" id="MF_00165"/>
    </source>
</evidence>
<evidence type="ECO:0000305" key="2"/>
<keyword id="KW-0067">ATP-binding</keyword>
<keyword id="KW-0418">Kinase</keyword>
<keyword id="KW-0545">Nucleotide biosynthesis</keyword>
<keyword id="KW-0547">Nucleotide-binding</keyword>
<keyword id="KW-0808">Transferase</keyword>
<sequence length="211" mass="23442">MITGKLITVEGPDGAGKTTVLEQLIPLLKQKVAQEILTTREPGGVAISEYIRELILDINHTAMDPKTELLLYIAARRQHLVEKVLPALEAGQLVFIDRFIDSSVAYQGAGRGLIKADIQWLNEFATDGLEPDLTLYFDVPSEIGLARINANQQREVNRLDLETIEIHQRVRKGYLALAKEHPKRIVTIDATKPLKEVVSVALEHVLALLLA</sequence>
<proteinExistence type="inferred from homology"/>
<name>KTHY_STRP6</name>
<organism>
    <name type="scientific">Streptococcus pyogenes serotype M6 (strain ATCC BAA-946 / MGAS10394)</name>
    <dbReference type="NCBI Taxonomy" id="286636"/>
    <lineage>
        <taxon>Bacteria</taxon>
        <taxon>Bacillati</taxon>
        <taxon>Bacillota</taxon>
        <taxon>Bacilli</taxon>
        <taxon>Lactobacillales</taxon>
        <taxon>Streptococcaceae</taxon>
        <taxon>Streptococcus</taxon>
    </lineage>
</organism>
<accession>Q5XDM2</accession>
<feature type="chain" id="PRO_0000155353" description="Thymidylate kinase">
    <location>
        <begin position="1"/>
        <end position="211"/>
    </location>
</feature>
<feature type="binding site" evidence="1">
    <location>
        <begin position="11"/>
        <end position="18"/>
    </location>
    <ligand>
        <name>ATP</name>
        <dbReference type="ChEBI" id="CHEBI:30616"/>
    </ligand>
</feature>
<comment type="function">
    <text evidence="1">Phosphorylation of dTMP to form dTDP in both de novo and salvage pathways of dTTP synthesis.</text>
</comment>
<comment type="catalytic activity">
    <reaction evidence="1">
        <text>dTMP + ATP = dTDP + ADP</text>
        <dbReference type="Rhea" id="RHEA:13517"/>
        <dbReference type="ChEBI" id="CHEBI:30616"/>
        <dbReference type="ChEBI" id="CHEBI:58369"/>
        <dbReference type="ChEBI" id="CHEBI:63528"/>
        <dbReference type="ChEBI" id="CHEBI:456216"/>
        <dbReference type="EC" id="2.7.4.9"/>
    </reaction>
</comment>
<comment type="similarity">
    <text evidence="1">Belongs to the thymidylate kinase family.</text>
</comment>
<comment type="sequence caution" evidence="2">
    <conflict type="erroneous initiation">
        <sequence resource="EMBL-CDS" id="AAT86491"/>
    </conflict>
</comment>